<keyword id="KW-0012">Acyltransferase</keyword>
<keyword id="KW-0963">Cytoplasm</keyword>
<keyword id="KW-0276">Fatty acid metabolism</keyword>
<keyword id="KW-0442">Lipid degradation</keyword>
<keyword id="KW-0443">Lipid metabolism</keyword>
<keyword id="KW-1185">Reference proteome</keyword>
<keyword id="KW-0808">Transferase</keyword>
<protein>
    <recommendedName>
        <fullName evidence="1">3-ketoacyl-CoA thiolase</fullName>
        <ecNumber evidence="1">2.3.1.16</ecNumber>
    </recommendedName>
    <alternativeName>
        <fullName evidence="1">ACSs</fullName>
    </alternativeName>
    <alternativeName>
        <fullName evidence="1">Acetyl-CoA acyltransferase</fullName>
    </alternativeName>
    <alternativeName>
        <fullName evidence="1">Acyl-CoA ligase</fullName>
    </alternativeName>
    <alternativeName>
        <fullName evidence="1">Beta-ketothiolase</fullName>
    </alternativeName>
    <alternativeName>
        <fullName evidence="1">Fatty acid oxidation complex subunit beta</fullName>
    </alternativeName>
</protein>
<evidence type="ECO:0000255" key="1">
    <source>
        <dbReference type="HAMAP-Rule" id="MF_01618"/>
    </source>
</evidence>
<proteinExistence type="inferred from homology"/>
<dbReference type="EC" id="2.3.1.16" evidence="1"/>
<dbReference type="EMBL" id="CP000822">
    <property type="protein sequence ID" value="ABV11604.1"/>
    <property type="molecule type" value="Genomic_DNA"/>
</dbReference>
<dbReference type="RefSeq" id="WP_012131431.1">
    <property type="nucleotide sequence ID" value="NC_009792.1"/>
</dbReference>
<dbReference type="SMR" id="A8ADP1"/>
<dbReference type="STRING" id="290338.CKO_00448"/>
<dbReference type="GeneID" id="45134698"/>
<dbReference type="KEGG" id="cko:CKO_00448"/>
<dbReference type="HOGENOM" id="CLU_031026_2_0_6"/>
<dbReference type="OrthoDB" id="8951704at2"/>
<dbReference type="UniPathway" id="UPA00659"/>
<dbReference type="Proteomes" id="UP000008148">
    <property type="component" value="Chromosome"/>
</dbReference>
<dbReference type="GO" id="GO:0005829">
    <property type="term" value="C:cytosol"/>
    <property type="evidence" value="ECO:0007669"/>
    <property type="project" value="TreeGrafter"/>
</dbReference>
<dbReference type="GO" id="GO:0003988">
    <property type="term" value="F:acetyl-CoA C-acyltransferase activity"/>
    <property type="evidence" value="ECO:0007669"/>
    <property type="project" value="UniProtKB-UniRule"/>
</dbReference>
<dbReference type="GO" id="GO:0006635">
    <property type="term" value="P:fatty acid beta-oxidation"/>
    <property type="evidence" value="ECO:0007669"/>
    <property type="project" value="UniProtKB-UniRule"/>
</dbReference>
<dbReference type="CDD" id="cd00751">
    <property type="entry name" value="thiolase"/>
    <property type="match status" value="1"/>
</dbReference>
<dbReference type="FunFam" id="3.40.47.10:FF:000011">
    <property type="entry name" value="3-ketoacyl-CoA thiolase"/>
    <property type="match status" value="1"/>
</dbReference>
<dbReference type="Gene3D" id="3.40.47.10">
    <property type="match status" value="1"/>
</dbReference>
<dbReference type="HAMAP" id="MF_01618">
    <property type="entry name" value="FadI"/>
    <property type="match status" value="1"/>
</dbReference>
<dbReference type="InterPro" id="IPR012806">
    <property type="entry name" value="Ac-CoA_C-AcTrfase_FadI"/>
</dbReference>
<dbReference type="InterPro" id="IPR002155">
    <property type="entry name" value="Thiolase"/>
</dbReference>
<dbReference type="InterPro" id="IPR016039">
    <property type="entry name" value="Thiolase-like"/>
</dbReference>
<dbReference type="InterPro" id="IPR020615">
    <property type="entry name" value="Thiolase_acyl_enz_int_AS"/>
</dbReference>
<dbReference type="InterPro" id="IPR020610">
    <property type="entry name" value="Thiolase_AS"/>
</dbReference>
<dbReference type="InterPro" id="IPR020617">
    <property type="entry name" value="Thiolase_C"/>
</dbReference>
<dbReference type="InterPro" id="IPR020613">
    <property type="entry name" value="Thiolase_CS"/>
</dbReference>
<dbReference type="InterPro" id="IPR020616">
    <property type="entry name" value="Thiolase_N"/>
</dbReference>
<dbReference type="NCBIfam" id="TIGR01930">
    <property type="entry name" value="AcCoA-C-Actrans"/>
    <property type="match status" value="1"/>
</dbReference>
<dbReference type="NCBIfam" id="TIGR02446">
    <property type="entry name" value="FadI"/>
    <property type="match status" value="1"/>
</dbReference>
<dbReference type="NCBIfam" id="NF006516">
    <property type="entry name" value="PRK08963.1"/>
    <property type="match status" value="1"/>
</dbReference>
<dbReference type="PANTHER" id="PTHR18919:SF107">
    <property type="entry name" value="ACETYL-COA ACETYLTRANSFERASE, CYTOSOLIC"/>
    <property type="match status" value="1"/>
</dbReference>
<dbReference type="PANTHER" id="PTHR18919">
    <property type="entry name" value="ACETYL-COA C-ACYLTRANSFERASE"/>
    <property type="match status" value="1"/>
</dbReference>
<dbReference type="Pfam" id="PF02803">
    <property type="entry name" value="Thiolase_C"/>
    <property type="match status" value="1"/>
</dbReference>
<dbReference type="Pfam" id="PF00108">
    <property type="entry name" value="Thiolase_N"/>
    <property type="match status" value="1"/>
</dbReference>
<dbReference type="PIRSF" id="PIRSF000429">
    <property type="entry name" value="Ac-CoA_Ac_transf"/>
    <property type="match status" value="1"/>
</dbReference>
<dbReference type="SUPFAM" id="SSF53901">
    <property type="entry name" value="Thiolase-like"/>
    <property type="match status" value="2"/>
</dbReference>
<dbReference type="PROSITE" id="PS00098">
    <property type="entry name" value="THIOLASE_1"/>
    <property type="match status" value="1"/>
</dbReference>
<dbReference type="PROSITE" id="PS00737">
    <property type="entry name" value="THIOLASE_2"/>
    <property type="match status" value="1"/>
</dbReference>
<dbReference type="PROSITE" id="PS00099">
    <property type="entry name" value="THIOLASE_3"/>
    <property type="match status" value="1"/>
</dbReference>
<comment type="function">
    <text evidence="1">Catalyzes the final step of fatty acid oxidation in which acetyl-CoA is released and the CoA ester of a fatty acid two carbons shorter is formed.</text>
</comment>
<comment type="catalytic activity">
    <reaction evidence="1">
        <text>an acyl-CoA + acetyl-CoA = a 3-oxoacyl-CoA + CoA</text>
        <dbReference type="Rhea" id="RHEA:21564"/>
        <dbReference type="ChEBI" id="CHEBI:57287"/>
        <dbReference type="ChEBI" id="CHEBI:57288"/>
        <dbReference type="ChEBI" id="CHEBI:58342"/>
        <dbReference type="ChEBI" id="CHEBI:90726"/>
        <dbReference type="EC" id="2.3.1.16"/>
    </reaction>
</comment>
<comment type="pathway">
    <text evidence="1">Lipid metabolism; fatty acid beta-oxidation.</text>
</comment>
<comment type="subunit">
    <text evidence="1">Heterotetramer of two alpha chains (FadJ) and two beta chains (FadI).</text>
</comment>
<comment type="subcellular location">
    <subcellularLocation>
        <location evidence="1">Cytoplasm</location>
    </subcellularLocation>
</comment>
<comment type="similarity">
    <text evidence="1">Belongs to the thiolase-like superfamily. Thiolase family.</text>
</comment>
<sequence>MSQALPLVTRQGDRIAIVSGLRTPFARQATAFHGIPAVELGKMVVGELLARSEIPAEVIEQLVFGQVVQMPEAPNIAREIVLGTGMNVHTDAYSVSRACATSFQAVANVAESLMAGTIRAGIAGGADSSSVLPIGVSKKLARILVDVNKARTTGQKLKLFSRLRLRDLMPVPPAVAEYSTGLRMGDTAEQMAKTYGITREQQDALAHRSHQRAAQAWAEGKLADEVMTTYAPPYKEPFSEDNNIRGNSTLADYAKLRPAFDRQHGTVTAANSTPLTDGAAAVILMTESRAKELGLAPLGYLRSYAFTAIDVWQDMLLGPAWSTPLALERAGLTLADLSLIDMHEAFAAQTLANIQLLGSERFARDVLGRAHATGEVDDSKFNVLGGSIAYGHPFAATGARMITQTLHELRRRGGGFGLVTACAAGGLGAAMVLEAE</sequence>
<organism>
    <name type="scientific">Citrobacter koseri (strain ATCC BAA-895 / CDC 4225-83 / SGSC4696)</name>
    <dbReference type="NCBI Taxonomy" id="290338"/>
    <lineage>
        <taxon>Bacteria</taxon>
        <taxon>Pseudomonadati</taxon>
        <taxon>Pseudomonadota</taxon>
        <taxon>Gammaproteobacteria</taxon>
        <taxon>Enterobacterales</taxon>
        <taxon>Enterobacteriaceae</taxon>
        <taxon>Citrobacter</taxon>
    </lineage>
</organism>
<gene>
    <name evidence="1" type="primary">fadI</name>
    <name type="ordered locus">CKO_00448</name>
</gene>
<name>FADI_CITK8</name>
<accession>A8ADP1</accession>
<feature type="chain" id="PRO_1000069494" description="3-ketoacyl-CoA thiolase">
    <location>
        <begin position="1"/>
        <end position="436"/>
    </location>
</feature>
<feature type="active site" description="Acyl-thioester intermediate" evidence="1">
    <location>
        <position position="99"/>
    </location>
</feature>
<feature type="active site" description="Proton acceptor" evidence="1">
    <location>
        <position position="392"/>
    </location>
</feature>
<feature type="active site" description="Proton acceptor" evidence="1">
    <location>
        <position position="422"/>
    </location>
</feature>
<reference key="1">
    <citation type="submission" date="2007-08" db="EMBL/GenBank/DDBJ databases">
        <authorList>
            <consortium name="The Citrobacter koseri Genome Sequencing Project"/>
            <person name="McClelland M."/>
            <person name="Sanderson E.K."/>
            <person name="Porwollik S."/>
            <person name="Spieth J."/>
            <person name="Clifton W.S."/>
            <person name="Latreille P."/>
            <person name="Courtney L."/>
            <person name="Wang C."/>
            <person name="Pepin K."/>
            <person name="Bhonagiri V."/>
            <person name="Nash W."/>
            <person name="Johnson M."/>
            <person name="Thiruvilangam P."/>
            <person name="Wilson R."/>
        </authorList>
    </citation>
    <scope>NUCLEOTIDE SEQUENCE [LARGE SCALE GENOMIC DNA]</scope>
    <source>
        <strain>ATCC BAA-895 / CDC 4225-83 / SGSC4696</strain>
    </source>
</reference>